<organism>
    <name type="scientific">Clostridium botulinum (strain Eklund 17B / Type B)</name>
    <dbReference type="NCBI Taxonomy" id="935198"/>
    <lineage>
        <taxon>Bacteria</taxon>
        <taxon>Bacillati</taxon>
        <taxon>Bacillota</taxon>
        <taxon>Clostridia</taxon>
        <taxon>Eubacteriales</taxon>
        <taxon>Clostridiaceae</taxon>
        <taxon>Clostridium</taxon>
    </lineage>
</organism>
<sequence>MSAFIVLGAQWGDEGKGKMTDYLAEEAEVVVRFQGGNNAGHTVEVGDKQYKLHLIPSGILYDDKLNVIGNGVVVDPKALFEEINYLEGVGVNVTPEKLIISDRAQLIMPYHKTLDVLKEKARGKNDIGTTGKGIGPCYTDKFERCGIRVCDLMHEDVFKEKLEENIRMKNEYITKVLGGEPLSFSEILNEYLEFAKKLRPFVQDTSVKVYNNIKENKTVLFEGAQGMLLDIDYGTYPYVTSSNTTAGGVCSGIGIGPNMVTNAVGITKAYTTRVGKGPFPTELVDETGDWIREKGHEYGVTTGRSRRCGWLDLVIVKTAARVSGLTSLAVTKIDTLAGLEKLKVCVGYKFDGKVIDYFPASLEDLAKCEPVYEEFDGWDDSVAEARTYEELPENAKKYLNRIAEFTDTKISIIGVGPKREQTIRIDSI</sequence>
<keyword id="KW-0963">Cytoplasm</keyword>
<keyword id="KW-0342">GTP-binding</keyword>
<keyword id="KW-0436">Ligase</keyword>
<keyword id="KW-0460">Magnesium</keyword>
<keyword id="KW-0479">Metal-binding</keyword>
<keyword id="KW-0547">Nucleotide-binding</keyword>
<keyword id="KW-0658">Purine biosynthesis</keyword>
<comment type="function">
    <text evidence="1">Plays an important role in the de novo pathway of purine nucleotide biosynthesis. Catalyzes the first committed step in the biosynthesis of AMP from IMP.</text>
</comment>
<comment type="catalytic activity">
    <reaction evidence="1">
        <text>IMP + L-aspartate + GTP = N(6)-(1,2-dicarboxyethyl)-AMP + GDP + phosphate + 2 H(+)</text>
        <dbReference type="Rhea" id="RHEA:15753"/>
        <dbReference type="ChEBI" id="CHEBI:15378"/>
        <dbReference type="ChEBI" id="CHEBI:29991"/>
        <dbReference type="ChEBI" id="CHEBI:37565"/>
        <dbReference type="ChEBI" id="CHEBI:43474"/>
        <dbReference type="ChEBI" id="CHEBI:57567"/>
        <dbReference type="ChEBI" id="CHEBI:58053"/>
        <dbReference type="ChEBI" id="CHEBI:58189"/>
        <dbReference type="EC" id="6.3.4.4"/>
    </reaction>
</comment>
<comment type="cofactor">
    <cofactor evidence="1">
        <name>Mg(2+)</name>
        <dbReference type="ChEBI" id="CHEBI:18420"/>
    </cofactor>
    <text evidence="1">Binds 1 Mg(2+) ion per subunit.</text>
</comment>
<comment type="pathway">
    <text evidence="1">Purine metabolism; AMP biosynthesis via de novo pathway; AMP from IMP: step 1/2.</text>
</comment>
<comment type="subunit">
    <text evidence="1">Homodimer.</text>
</comment>
<comment type="subcellular location">
    <subcellularLocation>
        <location evidence="1">Cytoplasm</location>
    </subcellularLocation>
</comment>
<comment type="similarity">
    <text evidence="1">Belongs to the adenylosuccinate synthetase family.</text>
</comment>
<gene>
    <name evidence="1" type="primary">purA</name>
    <name type="ordered locus">CLL_A3576</name>
</gene>
<name>PURA_CLOBB</name>
<reference key="1">
    <citation type="submission" date="2008-04" db="EMBL/GenBank/DDBJ databases">
        <title>Complete sequence of Clostridium botulinum strain Eklund.</title>
        <authorList>
            <person name="Brinkac L.M."/>
            <person name="Brown J.L."/>
            <person name="Bruce D."/>
            <person name="Detter C."/>
            <person name="Munk C."/>
            <person name="Smith L.A."/>
            <person name="Smith T.J."/>
            <person name="Sutton G."/>
            <person name="Brettin T.S."/>
        </authorList>
    </citation>
    <scope>NUCLEOTIDE SEQUENCE [LARGE SCALE GENOMIC DNA]</scope>
    <source>
        <strain>Eklund 17B / Type B</strain>
    </source>
</reference>
<evidence type="ECO:0000255" key="1">
    <source>
        <dbReference type="HAMAP-Rule" id="MF_00011"/>
    </source>
</evidence>
<dbReference type="EC" id="6.3.4.4" evidence="1"/>
<dbReference type="EMBL" id="CP001056">
    <property type="protein sequence ID" value="ACD21751.1"/>
    <property type="molecule type" value="Genomic_DNA"/>
</dbReference>
<dbReference type="SMR" id="B2TRE4"/>
<dbReference type="KEGG" id="cbk:CLL_A3576"/>
<dbReference type="PATRIC" id="fig|935198.13.peg.3498"/>
<dbReference type="HOGENOM" id="CLU_029848_0_0_9"/>
<dbReference type="UniPathway" id="UPA00075">
    <property type="reaction ID" value="UER00335"/>
</dbReference>
<dbReference type="Proteomes" id="UP000001195">
    <property type="component" value="Chromosome"/>
</dbReference>
<dbReference type="GO" id="GO:0005737">
    <property type="term" value="C:cytoplasm"/>
    <property type="evidence" value="ECO:0007669"/>
    <property type="project" value="UniProtKB-SubCell"/>
</dbReference>
<dbReference type="GO" id="GO:0004019">
    <property type="term" value="F:adenylosuccinate synthase activity"/>
    <property type="evidence" value="ECO:0007669"/>
    <property type="project" value="UniProtKB-UniRule"/>
</dbReference>
<dbReference type="GO" id="GO:0005525">
    <property type="term" value="F:GTP binding"/>
    <property type="evidence" value="ECO:0007669"/>
    <property type="project" value="UniProtKB-UniRule"/>
</dbReference>
<dbReference type="GO" id="GO:0000287">
    <property type="term" value="F:magnesium ion binding"/>
    <property type="evidence" value="ECO:0007669"/>
    <property type="project" value="UniProtKB-UniRule"/>
</dbReference>
<dbReference type="GO" id="GO:0044208">
    <property type="term" value="P:'de novo' AMP biosynthetic process"/>
    <property type="evidence" value="ECO:0007669"/>
    <property type="project" value="UniProtKB-UniRule"/>
</dbReference>
<dbReference type="GO" id="GO:0046040">
    <property type="term" value="P:IMP metabolic process"/>
    <property type="evidence" value="ECO:0007669"/>
    <property type="project" value="TreeGrafter"/>
</dbReference>
<dbReference type="CDD" id="cd03108">
    <property type="entry name" value="AdSS"/>
    <property type="match status" value="1"/>
</dbReference>
<dbReference type="FunFam" id="1.10.300.10:FF:000001">
    <property type="entry name" value="Adenylosuccinate synthetase"/>
    <property type="match status" value="1"/>
</dbReference>
<dbReference type="FunFam" id="3.90.170.10:FF:000001">
    <property type="entry name" value="Adenylosuccinate synthetase"/>
    <property type="match status" value="1"/>
</dbReference>
<dbReference type="Gene3D" id="3.40.440.10">
    <property type="entry name" value="Adenylosuccinate Synthetase, subunit A, domain 1"/>
    <property type="match status" value="1"/>
</dbReference>
<dbReference type="Gene3D" id="1.10.300.10">
    <property type="entry name" value="Adenylosuccinate Synthetase, subunit A, domain 2"/>
    <property type="match status" value="1"/>
</dbReference>
<dbReference type="Gene3D" id="3.90.170.10">
    <property type="entry name" value="Adenylosuccinate Synthetase, subunit A, domain 3"/>
    <property type="match status" value="1"/>
</dbReference>
<dbReference type="HAMAP" id="MF_00011">
    <property type="entry name" value="Adenylosucc_synth"/>
    <property type="match status" value="1"/>
</dbReference>
<dbReference type="InterPro" id="IPR018220">
    <property type="entry name" value="Adenylosuccin_syn_GTP-bd"/>
</dbReference>
<dbReference type="InterPro" id="IPR033128">
    <property type="entry name" value="Adenylosuccin_syn_Lys_AS"/>
</dbReference>
<dbReference type="InterPro" id="IPR042109">
    <property type="entry name" value="Adenylosuccinate_synth_dom1"/>
</dbReference>
<dbReference type="InterPro" id="IPR042110">
    <property type="entry name" value="Adenylosuccinate_synth_dom2"/>
</dbReference>
<dbReference type="InterPro" id="IPR042111">
    <property type="entry name" value="Adenylosuccinate_synth_dom3"/>
</dbReference>
<dbReference type="InterPro" id="IPR001114">
    <property type="entry name" value="Adenylosuccinate_synthetase"/>
</dbReference>
<dbReference type="InterPro" id="IPR027417">
    <property type="entry name" value="P-loop_NTPase"/>
</dbReference>
<dbReference type="NCBIfam" id="NF002223">
    <property type="entry name" value="PRK01117.1"/>
    <property type="match status" value="1"/>
</dbReference>
<dbReference type="NCBIfam" id="TIGR00184">
    <property type="entry name" value="purA"/>
    <property type="match status" value="1"/>
</dbReference>
<dbReference type="PANTHER" id="PTHR11846">
    <property type="entry name" value="ADENYLOSUCCINATE SYNTHETASE"/>
    <property type="match status" value="1"/>
</dbReference>
<dbReference type="PANTHER" id="PTHR11846:SF0">
    <property type="entry name" value="ADENYLOSUCCINATE SYNTHETASE"/>
    <property type="match status" value="1"/>
</dbReference>
<dbReference type="Pfam" id="PF00709">
    <property type="entry name" value="Adenylsucc_synt"/>
    <property type="match status" value="1"/>
</dbReference>
<dbReference type="SMART" id="SM00788">
    <property type="entry name" value="Adenylsucc_synt"/>
    <property type="match status" value="1"/>
</dbReference>
<dbReference type="SUPFAM" id="SSF52540">
    <property type="entry name" value="P-loop containing nucleoside triphosphate hydrolases"/>
    <property type="match status" value="1"/>
</dbReference>
<dbReference type="PROSITE" id="PS01266">
    <property type="entry name" value="ADENYLOSUCCIN_SYN_1"/>
    <property type="match status" value="1"/>
</dbReference>
<dbReference type="PROSITE" id="PS00513">
    <property type="entry name" value="ADENYLOSUCCIN_SYN_2"/>
    <property type="match status" value="1"/>
</dbReference>
<feature type="chain" id="PRO_1000089279" description="Adenylosuccinate synthetase">
    <location>
        <begin position="1"/>
        <end position="428"/>
    </location>
</feature>
<feature type="active site" description="Proton acceptor" evidence="1">
    <location>
        <position position="13"/>
    </location>
</feature>
<feature type="active site" description="Proton donor" evidence="1">
    <location>
        <position position="41"/>
    </location>
</feature>
<feature type="binding site" evidence="1">
    <location>
        <begin position="12"/>
        <end position="18"/>
    </location>
    <ligand>
        <name>GTP</name>
        <dbReference type="ChEBI" id="CHEBI:37565"/>
    </ligand>
</feature>
<feature type="binding site" description="in other chain" evidence="1">
    <location>
        <begin position="13"/>
        <end position="16"/>
    </location>
    <ligand>
        <name>IMP</name>
        <dbReference type="ChEBI" id="CHEBI:58053"/>
        <note>ligand shared between dimeric partners</note>
    </ligand>
</feature>
<feature type="binding site" evidence="1">
    <location>
        <position position="13"/>
    </location>
    <ligand>
        <name>Mg(2+)</name>
        <dbReference type="ChEBI" id="CHEBI:18420"/>
    </ligand>
</feature>
<feature type="binding site" description="in other chain" evidence="1">
    <location>
        <begin position="38"/>
        <end position="41"/>
    </location>
    <ligand>
        <name>IMP</name>
        <dbReference type="ChEBI" id="CHEBI:58053"/>
        <note>ligand shared between dimeric partners</note>
    </ligand>
</feature>
<feature type="binding site" evidence="1">
    <location>
        <begin position="40"/>
        <end position="42"/>
    </location>
    <ligand>
        <name>GTP</name>
        <dbReference type="ChEBI" id="CHEBI:37565"/>
    </ligand>
</feature>
<feature type="binding site" evidence="1">
    <location>
        <position position="40"/>
    </location>
    <ligand>
        <name>Mg(2+)</name>
        <dbReference type="ChEBI" id="CHEBI:18420"/>
    </ligand>
</feature>
<feature type="binding site" description="in other chain" evidence="1">
    <location>
        <position position="130"/>
    </location>
    <ligand>
        <name>IMP</name>
        <dbReference type="ChEBI" id="CHEBI:58053"/>
        <note>ligand shared between dimeric partners</note>
    </ligand>
</feature>
<feature type="binding site" evidence="1">
    <location>
        <position position="144"/>
    </location>
    <ligand>
        <name>IMP</name>
        <dbReference type="ChEBI" id="CHEBI:58053"/>
        <note>ligand shared between dimeric partners</note>
    </ligand>
</feature>
<feature type="binding site" description="in other chain" evidence="1">
    <location>
        <position position="225"/>
    </location>
    <ligand>
        <name>IMP</name>
        <dbReference type="ChEBI" id="CHEBI:58053"/>
        <note>ligand shared between dimeric partners</note>
    </ligand>
</feature>
<feature type="binding site" description="in other chain" evidence="1">
    <location>
        <position position="240"/>
    </location>
    <ligand>
        <name>IMP</name>
        <dbReference type="ChEBI" id="CHEBI:58053"/>
        <note>ligand shared between dimeric partners</note>
    </ligand>
</feature>
<feature type="binding site" evidence="1">
    <location>
        <begin position="300"/>
        <end position="306"/>
    </location>
    <ligand>
        <name>substrate</name>
    </ligand>
</feature>
<feature type="binding site" description="in other chain" evidence="1">
    <location>
        <position position="304"/>
    </location>
    <ligand>
        <name>IMP</name>
        <dbReference type="ChEBI" id="CHEBI:58053"/>
        <note>ligand shared between dimeric partners</note>
    </ligand>
</feature>
<feature type="binding site" evidence="1">
    <location>
        <position position="306"/>
    </location>
    <ligand>
        <name>GTP</name>
        <dbReference type="ChEBI" id="CHEBI:37565"/>
    </ligand>
</feature>
<feature type="binding site" evidence="1">
    <location>
        <begin position="332"/>
        <end position="334"/>
    </location>
    <ligand>
        <name>GTP</name>
        <dbReference type="ChEBI" id="CHEBI:37565"/>
    </ligand>
</feature>
<feature type="binding site" evidence="1">
    <location>
        <begin position="414"/>
        <end position="416"/>
    </location>
    <ligand>
        <name>GTP</name>
        <dbReference type="ChEBI" id="CHEBI:37565"/>
    </ligand>
</feature>
<accession>B2TRE4</accession>
<protein>
    <recommendedName>
        <fullName evidence="1">Adenylosuccinate synthetase</fullName>
        <shortName evidence="1">AMPSase</shortName>
        <shortName evidence="1">AdSS</shortName>
        <ecNumber evidence="1">6.3.4.4</ecNumber>
    </recommendedName>
    <alternativeName>
        <fullName evidence="1">IMP--aspartate ligase</fullName>
    </alternativeName>
</protein>
<proteinExistence type="inferred from homology"/>